<comment type="function">
    <text evidence="1">Necessary for the splicing of pre-mRNA.</text>
</comment>
<comment type="subcellular location">
    <subcellularLocation>
        <location evidence="1">Nucleus</location>
    </subcellularLocation>
</comment>
<comment type="domain">
    <text>N-terminal RS domain has a very strong bias in favor of D over S.</text>
</comment>
<comment type="similarity">
    <text evidence="4">Belongs to the splicing factor SR family.</text>
</comment>
<dbReference type="EMBL" id="DQ019636">
    <property type="protein sequence ID" value="AAY84881.1"/>
    <property type="molecule type" value="mRNA"/>
</dbReference>
<dbReference type="SMR" id="Q2QKB3"/>
<dbReference type="STRING" id="4565.Q2QKB3"/>
<dbReference type="PaxDb" id="4565-Traes_5AL_647E44702.2"/>
<dbReference type="eggNOG" id="KOG0120">
    <property type="taxonomic scope" value="Eukaryota"/>
</dbReference>
<dbReference type="Proteomes" id="UP000019116">
    <property type="component" value="Unplaced"/>
</dbReference>
<dbReference type="ExpressionAtlas" id="Q2QKB3">
    <property type="expression patterns" value="baseline and differential"/>
</dbReference>
<dbReference type="GO" id="GO:0000243">
    <property type="term" value="C:commitment complex"/>
    <property type="evidence" value="ECO:0000318"/>
    <property type="project" value="GO_Central"/>
</dbReference>
<dbReference type="GO" id="GO:0016607">
    <property type="term" value="C:nuclear speck"/>
    <property type="evidence" value="ECO:0000318"/>
    <property type="project" value="GO_Central"/>
</dbReference>
<dbReference type="GO" id="GO:0071004">
    <property type="term" value="C:U2-type prespliceosome"/>
    <property type="evidence" value="ECO:0000318"/>
    <property type="project" value="GO_Central"/>
</dbReference>
<dbReference type="GO" id="GO:0089701">
    <property type="term" value="C:U2AF complex"/>
    <property type="evidence" value="ECO:0000318"/>
    <property type="project" value="GO_Central"/>
</dbReference>
<dbReference type="GO" id="GO:0008187">
    <property type="term" value="F:poly-pyrimidine tract binding"/>
    <property type="evidence" value="ECO:0000318"/>
    <property type="project" value="GO_Central"/>
</dbReference>
<dbReference type="GO" id="GO:0030628">
    <property type="term" value="F:pre-mRNA 3'-splice site binding"/>
    <property type="evidence" value="ECO:0000318"/>
    <property type="project" value="GO_Central"/>
</dbReference>
<dbReference type="GO" id="GO:0000245">
    <property type="term" value="P:spliceosomal complex assembly"/>
    <property type="evidence" value="ECO:0000318"/>
    <property type="project" value="GO_Central"/>
</dbReference>
<dbReference type="CDD" id="cd12230">
    <property type="entry name" value="RRM1_U2AF65"/>
    <property type="match status" value="1"/>
</dbReference>
<dbReference type="CDD" id="cd12231">
    <property type="entry name" value="RRM2_U2AF65"/>
    <property type="match status" value="1"/>
</dbReference>
<dbReference type="FunFam" id="3.30.70.330:FF:000057">
    <property type="entry name" value="U2 snRNP auxiliary factor large subunit"/>
    <property type="match status" value="1"/>
</dbReference>
<dbReference type="FunFam" id="3.30.70.330:FF:000111">
    <property type="entry name" value="U2 snRNP auxiliary factor large subunit"/>
    <property type="match status" value="1"/>
</dbReference>
<dbReference type="Gene3D" id="3.30.70.330">
    <property type="match status" value="2"/>
</dbReference>
<dbReference type="InterPro" id="IPR012677">
    <property type="entry name" value="Nucleotide-bd_a/b_plait_sf"/>
</dbReference>
<dbReference type="InterPro" id="IPR035979">
    <property type="entry name" value="RBD_domain_sf"/>
</dbReference>
<dbReference type="InterPro" id="IPR000504">
    <property type="entry name" value="RRM_dom"/>
</dbReference>
<dbReference type="InterPro" id="IPR006529">
    <property type="entry name" value="U2AF_lg"/>
</dbReference>
<dbReference type="NCBIfam" id="TIGR01642">
    <property type="entry name" value="U2AF_lg"/>
    <property type="match status" value="1"/>
</dbReference>
<dbReference type="PANTHER" id="PTHR23139">
    <property type="entry name" value="RNA-BINDING PROTEIN"/>
    <property type="match status" value="1"/>
</dbReference>
<dbReference type="Pfam" id="PF00076">
    <property type="entry name" value="RRM_1"/>
    <property type="match status" value="1"/>
</dbReference>
<dbReference type="SMART" id="SM00360">
    <property type="entry name" value="RRM"/>
    <property type="match status" value="2"/>
</dbReference>
<dbReference type="SUPFAM" id="SSF54928">
    <property type="entry name" value="RNA-binding domain, RBD"/>
    <property type="match status" value="2"/>
</dbReference>
<dbReference type="PROSITE" id="PS50102">
    <property type="entry name" value="RRM"/>
    <property type="match status" value="2"/>
</dbReference>
<gene>
    <name type="primary">U2AF65A</name>
</gene>
<name>U2A2A_WHEAT</name>
<accession>Q2QKB3</accession>
<protein>
    <recommendedName>
        <fullName>Splicing factor U2af large subunit A</fullName>
    </recommendedName>
    <alternativeName>
        <fullName>U2 auxiliary factor 65 kDa subunit A</fullName>
    </alternativeName>
    <alternativeName>
        <fullName>U2 small nuclear ribonucleoprotein auxiliary factor large subunit A</fullName>
        <shortName>U2 snRNP auxiliary factor large subunit A</shortName>
    </alternativeName>
</protein>
<organism>
    <name type="scientific">Triticum aestivum</name>
    <name type="common">Wheat</name>
    <dbReference type="NCBI Taxonomy" id="4565"/>
    <lineage>
        <taxon>Eukaryota</taxon>
        <taxon>Viridiplantae</taxon>
        <taxon>Streptophyta</taxon>
        <taxon>Embryophyta</taxon>
        <taxon>Tracheophyta</taxon>
        <taxon>Spermatophyta</taxon>
        <taxon>Magnoliopsida</taxon>
        <taxon>Liliopsida</taxon>
        <taxon>Poales</taxon>
        <taxon>Poaceae</taxon>
        <taxon>BOP clade</taxon>
        <taxon>Pooideae</taxon>
        <taxon>Triticodae</taxon>
        <taxon>Triticeae</taxon>
        <taxon>Triticinae</taxon>
        <taxon>Triticum</taxon>
    </lineage>
</organism>
<proteinExistence type="evidence at transcript level"/>
<evidence type="ECO:0000250" key="1"/>
<evidence type="ECO:0000255" key="2">
    <source>
        <dbReference type="PROSITE-ProRule" id="PRU00176"/>
    </source>
</evidence>
<evidence type="ECO:0000256" key="3">
    <source>
        <dbReference type="SAM" id="MobiDB-lite"/>
    </source>
</evidence>
<evidence type="ECO:0000305" key="4"/>
<feature type="chain" id="PRO_0000352273" description="Splicing factor U2af large subunit A">
    <location>
        <begin position="1"/>
        <end position="591"/>
    </location>
</feature>
<feature type="domain" description="RRM 1" evidence="2">
    <location>
        <begin position="272"/>
        <end position="355"/>
    </location>
</feature>
<feature type="domain" description="RRM 2" evidence="2">
    <location>
        <begin position="392"/>
        <end position="470"/>
    </location>
</feature>
<feature type="region of interest" description="Disordered" evidence="3">
    <location>
        <begin position="1"/>
        <end position="215"/>
    </location>
</feature>
<feature type="compositionally biased region" description="Polar residues" evidence="3">
    <location>
        <begin position="27"/>
        <end position="36"/>
    </location>
</feature>
<feature type="compositionally biased region" description="Basic and acidic residues" evidence="3">
    <location>
        <begin position="37"/>
        <end position="79"/>
    </location>
</feature>
<feature type="compositionally biased region" description="Basic and acidic residues" evidence="3">
    <location>
        <begin position="157"/>
        <end position="191"/>
    </location>
</feature>
<keyword id="KW-0507">mRNA processing</keyword>
<keyword id="KW-0508">mRNA splicing</keyword>
<keyword id="KW-0539">Nucleus</keyword>
<keyword id="KW-1185">Reference proteome</keyword>
<keyword id="KW-0677">Repeat</keyword>
<keyword id="KW-0694">RNA-binding</keyword>
<reference key="1">
    <citation type="journal article" date="2006" name="Plant Mol. Biol.">
        <title>Systematic identification of factors involved in post-transcriptional processes in wheat grain.</title>
        <authorList>
            <person name="Lopato S."/>
            <person name="Borisjuk L."/>
            <person name="Milligan A.S."/>
            <person name="Shirley N."/>
            <person name="Bazanova N."/>
            <person name="Langridge P."/>
        </authorList>
    </citation>
    <scope>NUCLEOTIDE SEQUENCE [MRNA]</scope>
    <source>
        <strain>cv. Chinese Spring</strain>
        <tissue>Grain</tissue>
    </source>
</reference>
<sequence>MAEHDAPPESGAARSPPAKKRGGDARSPQQDAQPLSSRDRVRERDEDKDRERHRRHGEDRERYRDRESVRERGEGSRDRERHRREHREESRDRERHHREHREGSRDRERHHREHREGSRDRERHHREHREGSRDRERHHRDHREGSRDRERHHRDHRERSERREHRDRSDDRDYRRSCDRDAERRDRDRDGHRRHRSRSPLRSESQSKRMSGFDQRPSEAIPILAPDATPSQLPELPAANPGMFPNMLPNLVNVPALGQPLAMTQQATRHARRVYVGGLPPIANEQTVAVFFNQVMAAIGGNTFALGHAVVNVYINHDKKFAFVEMRSVEEASNAMALDGIMFEGAPVKVRRPTDYNPSQAAALGPSQPNPNLNLAAVGLTPGAGGGLEGPDRIFVGGLPYYFTEAQVRELLETFGPLRGFDIVKDKETGNSKGYAFCLYKDGTVTDIACAALNGIQLGDRTLTVRRANQGAEPRPEQENILLQAQQEAQMKRLVYEVGRTLTTKVVCLTQVVSADDLRDDEEYNDILEDMTLEGHKYVPHSTIAESFIIRPHAKFAIRPKLTEDTNLFHLDLTNHMFSSLPFCHVHVCSY</sequence>